<evidence type="ECO:0000255" key="1">
    <source>
        <dbReference type="HAMAP-Rule" id="MF_01318"/>
    </source>
</evidence>
<evidence type="ECO:0000305" key="2"/>
<comment type="function">
    <text evidence="1">Binds directly to 23S rRNA. The L1 stalk is quite mobile in the ribosome, and is involved in E site tRNA release.</text>
</comment>
<comment type="function">
    <text evidence="1">Protein L1 is also a translational repressor protein, it controls the translation of the L11 operon by binding to its mRNA.</text>
</comment>
<comment type="subunit">
    <text evidence="1">Part of the 50S ribosomal subunit.</text>
</comment>
<comment type="similarity">
    <text evidence="1">Belongs to the universal ribosomal protein uL1 family.</text>
</comment>
<organism>
    <name type="scientific">Tropheryma whipplei (strain TW08/27)</name>
    <name type="common">Whipple's bacillus</name>
    <dbReference type="NCBI Taxonomy" id="218496"/>
    <lineage>
        <taxon>Bacteria</taxon>
        <taxon>Bacillati</taxon>
        <taxon>Actinomycetota</taxon>
        <taxon>Actinomycetes</taxon>
        <taxon>Micrococcales</taxon>
        <taxon>Tropherymataceae</taxon>
        <taxon>Tropheryma</taxon>
    </lineage>
</organism>
<name>RL1_TROW8</name>
<dbReference type="EMBL" id="BX251412">
    <property type="protein sequence ID" value="CAD67389.1"/>
    <property type="molecule type" value="Genomic_DNA"/>
</dbReference>
<dbReference type="RefSeq" id="WP_011096667.1">
    <property type="nucleotide sequence ID" value="NC_004551.1"/>
</dbReference>
<dbReference type="SMR" id="P66100"/>
<dbReference type="GeneID" id="67388507"/>
<dbReference type="KEGG" id="tws:TW730"/>
<dbReference type="HOGENOM" id="CLU_062853_0_0_11"/>
<dbReference type="GO" id="GO:0015934">
    <property type="term" value="C:large ribosomal subunit"/>
    <property type="evidence" value="ECO:0007669"/>
    <property type="project" value="InterPro"/>
</dbReference>
<dbReference type="GO" id="GO:0019843">
    <property type="term" value="F:rRNA binding"/>
    <property type="evidence" value="ECO:0007669"/>
    <property type="project" value="UniProtKB-UniRule"/>
</dbReference>
<dbReference type="GO" id="GO:0003735">
    <property type="term" value="F:structural constituent of ribosome"/>
    <property type="evidence" value="ECO:0007669"/>
    <property type="project" value="InterPro"/>
</dbReference>
<dbReference type="GO" id="GO:0000049">
    <property type="term" value="F:tRNA binding"/>
    <property type="evidence" value="ECO:0007669"/>
    <property type="project" value="UniProtKB-KW"/>
</dbReference>
<dbReference type="GO" id="GO:0006417">
    <property type="term" value="P:regulation of translation"/>
    <property type="evidence" value="ECO:0007669"/>
    <property type="project" value="UniProtKB-KW"/>
</dbReference>
<dbReference type="GO" id="GO:0006412">
    <property type="term" value="P:translation"/>
    <property type="evidence" value="ECO:0007669"/>
    <property type="project" value="UniProtKB-UniRule"/>
</dbReference>
<dbReference type="CDD" id="cd00403">
    <property type="entry name" value="Ribosomal_L1"/>
    <property type="match status" value="1"/>
</dbReference>
<dbReference type="FunFam" id="3.40.50.790:FF:000001">
    <property type="entry name" value="50S ribosomal protein L1"/>
    <property type="match status" value="1"/>
</dbReference>
<dbReference type="Gene3D" id="3.30.190.20">
    <property type="match status" value="1"/>
</dbReference>
<dbReference type="Gene3D" id="3.40.50.790">
    <property type="match status" value="1"/>
</dbReference>
<dbReference type="HAMAP" id="MF_01318_B">
    <property type="entry name" value="Ribosomal_uL1_B"/>
    <property type="match status" value="1"/>
</dbReference>
<dbReference type="InterPro" id="IPR005878">
    <property type="entry name" value="Ribosom_uL1_bac-type"/>
</dbReference>
<dbReference type="InterPro" id="IPR002143">
    <property type="entry name" value="Ribosomal_uL1"/>
</dbReference>
<dbReference type="InterPro" id="IPR023674">
    <property type="entry name" value="Ribosomal_uL1-like"/>
</dbReference>
<dbReference type="InterPro" id="IPR028364">
    <property type="entry name" value="Ribosomal_uL1/biogenesis"/>
</dbReference>
<dbReference type="InterPro" id="IPR016095">
    <property type="entry name" value="Ribosomal_uL1_3-a/b-sand"/>
</dbReference>
<dbReference type="InterPro" id="IPR023673">
    <property type="entry name" value="Ribosomal_uL1_CS"/>
</dbReference>
<dbReference type="NCBIfam" id="TIGR01169">
    <property type="entry name" value="rplA_bact"/>
    <property type="match status" value="1"/>
</dbReference>
<dbReference type="PANTHER" id="PTHR36427">
    <property type="entry name" value="54S RIBOSOMAL PROTEIN L1, MITOCHONDRIAL"/>
    <property type="match status" value="1"/>
</dbReference>
<dbReference type="PANTHER" id="PTHR36427:SF3">
    <property type="entry name" value="LARGE RIBOSOMAL SUBUNIT PROTEIN UL1M"/>
    <property type="match status" value="1"/>
</dbReference>
<dbReference type="Pfam" id="PF00687">
    <property type="entry name" value="Ribosomal_L1"/>
    <property type="match status" value="1"/>
</dbReference>
<dbReference type="PIRSF" id="PIRSF002155">
    <property type="entry name" value="Ribosomal_L1"/>
    <property type="match status" value="1"/>
</dbReference>
<dbReference type="SUPFAM" id="SSF56808">
    <property type="entry name" value="Ribosomal protein L1"/>
    <property type="match status" value="1"/>
</dbReference>
<dbReference type="PROSITE" id="PS01199">
    <property type="entry name" value="RIBOSOMAL_L1"/>
    <property type="match status" value="1"/>
</dbReference>
<proteinExistence type="inferred from homology"/>
<reference key="1">
    <citation type="journal article" date="2003" name="Lancet">
        <title>Sequencing and analysis of the genome of the Whipple's disease bacterium Tropheryma whipplei.</title>
        <authorList>
            <person name="Bentley S.D."/>
            <person name="Maiwald M."/>
            <person name="Murphy L.D."/>
            <person name="Pallen M.J."/>
            <person name="Yeats C.A."/>
            <person name="Dover L.G."/>
            <person name="Norbertczak H.T."/>
            <person name="Besra G.S."/>
            <person name="Quail M.A."/>
            <person name="Harris D.E."/>
            <person name="von Herbay A."/>
            <person name="Goble A."/>
            <person name="Rutter S."/>
            <person name="Squares R."/>
            <person name="Squares S."/>
            <person name="Barrell B.G."/>
            <person name="Parkhill J."/>
            <person name="Relman D.A."/>
        </authorList>
    </citation>
    <scope>NUCLEOTIDE SEQUENCE [LARGE SCALE GENOMIC DNA]</scope>
    <source>
        <strain>TW08/27</strain>
    </source>
</reference>
<feature type="chain" id="PRO_0000125770" description="Large ribosomal subunit protein uL1">
    <location>
        <begin position="1"/>
        <end position="227"/>
    </location>
</feature>
<protein>
    <recommendedName>
        <fullName evidence="1">Large ribosomal subunit protein uL1</fullName>
    </recommendedName>
    <alternativeName>
        <fullName evidence="2">50S ribosomal protein L1</fullName>
    </alternativeName>
</protein>
<gene>
    <name evidence="1" type="primary">rplA</name>
    <name type="ordered locus">TW730</name>
</gene>
<keyword id="KW-0678">Repressor</keyword>
<keyword id="KW-0687">Ribonucleoprotein</keyword>
<keyword id="KW-0689">Ribosomal protein</keyword>
<keyword id="KW-0694">RNA-binding</keyword>
<keyword id="KW-0699">rRNA-binding</keyword>
<keyword id="KW-0810">Translation regulation</keyword>
<keyword id="KW-0820">tRNA-binding</keyword>
<sequence length="227" mass="24103">MTKRSKAYRSAVTSIASDKLYPVEDAIGLVKETAYAKIDSAFEVALKLGIDPRKTDQLVRGVVMLPHGTGKAVRVVVFATGPSAQAALDSGASEVGGSDLVARVADGYVDFDVAISTPELMAQVGQLGRVLGPRGLMPNPKTGTVTADVGKAVKDALGGRIEFKTDKHANIHFVIGKTSFSVESLSENLSVALDEINRARPQKHKGRYIKKMFFSSTFGPSVRVALA</sequence>
<accession>P66100</accession>
<accession>Q83FK9</accession>
<accession>Q83HB0</accession>